<gene>
    <name type="primary">vanA</name>
</gene>
<sequence>MFPKNAWYVACTPDEIADKPLGRQICNEKIVFYRGPEGRVAAVEDFCPHRGAPLSLGFVRDGKLICGYHGLEMGCEGKTLAMPGQRVQGFPCIKSYAVEERYGFIWVWPGDRELADPALIHHLEWADNPEWAYGGGLYHIACDYRLMIDNLMDLTHETYVHASSIGQKEIDEAPVSTRVEGDTVITSRYMDNVMAPPFWRAALRGNGLADDVPVDRWQICRFAPPSHVLIEVGVAHAGKGGYDAPAEYKAGSIVVDFITPESDTSIWYFWGMARNFRPQGTELTETIRVGQGKIFAEDLDMLEQQQRNLLAYPERQLLKLNIDAGGVQSRRVIDRILAAEQEAADAALIARSAS</sequence>
<reference key="1">
    <citation type="journal article" date="1997" name="J. Bacteriol.">
        <title>Molecular characterization of genes of Pseudomonas sp. strain HR199 involved in bioconversion of vanillin to protocatechuate.</title>
        <authorList>
            <person name="Priefert H."/>
            <person name="Rabenhorst J."/>
            <person name="Steinbuechel A."/>
        </authorList>
    </citation>
    <scope>NUCLEOTIDE SEQUENCE [GENOMIC DNA]</scope>
</reference>
<feature type="chain" id="PRO_0000085059" description="Vanillate O-demethylase oxygenase subunit">
    <location>
        <begin position="1"/>
        <end position="354"/>
    </location>
</feature>
<feature type="domain" description="Rieske" evidence="1">
    <location>
        <begin position="7"/>
        <end position="107"/>
    </location>
</feature>
<feature type="binding site" evidence="1">
    <location>
        <position position="47"/>
    </location>
    <ligand>
        <name>[2Fe-2S] cluster</name>
        <dbReference type="ChEBI" id="CHEBI:190135"/>
    </ligand>
</feature>
<feature type="binding site" evidence="1">
    <location>
        <position position="49"/>
    </location>
    <ligand>
        <name>[2Fe-2S] cluster</name>
        <dbReference type="ChEBI" id="CHEBI:190135"/>
    </ligand>
</feature>
<feature type="binding site" evidence="1">
    <location>
        <position position="66"/>
    </location>
    <ligand>
        <name>[2Fe-2S] cluster</name>
        <dbReference type="ChEBI" id="CHEBI:190135"/>
    </ligand>
</feature>
<feature type="binding site" evidence="1">
    <location>
        <position position="69"/>
    </location>
    <ligand>
        <name>[2Fe-2S] cluster</name>
        <dbReference type="ChEBI" id="CHEBI:190135"/>
    </ligand>
</feature>
<proteinExistence type="inferred from homology"/>
<keyword id="KW-0001">2Fe-2S</keyword>
<keyword id="KW-0058">Aromatic hydrocarbons catabolism</keyword>
<keyword id="KW-0408">Iron</keyword>
<keyword id="KW-0411">Iron-sulfur</keyword>
<keyword id="KW-0439">Lignin degradation</keyword>
<keyword id="KW-0479">Metal-binding</keyword>
<keyword id="KW-0503">Monooxygenase</keyword>
<keyword id="KW-0520">NAD</keyword>
<keyword id="KW-0560">Oxidoreductase</keyword>
<accession>O05616</accession>
<evidence type="ECO:0000255" key="1">
    <source>
        <dbReference type="PROSITE-ProRule" id="PRU00628"/>
    </source>
</evidence>
<evidence type="ECO:0000305" key="2"/>
<name>VANA_PSEUH</name>
<protein>
    <recommendedName>
        <fullName>Vanillate O-demethylase oxygenase subunit</fullName>
        <ecNumber>1.14.13.82</ecNumber>
    </recommendedName>
    <alternativeName>
        <fullName>4-hydroxy-3-methoxybenzoate demethylase</fullName>
    </alternativeName>
</protein>
<comment type="catalytic activity">
    <reaction>
        <text>vanillate + NADH + O2 + H(+) = 3,4-dihydroxybenzoate + formaldehyde + NAD(+) + H2O</text>
        <dbReference type="Rhea" id="RHEA:13021"/>
        <dbReference type="ChEBI" id="CHEBI:15377"/>
        <dbReference type="ChEBI" id="CHEBI:15378"/>
        <dbReference type="ChEBI" id="CHEBI:15379"/>
        <dbReference type="ChEBI" id="CHEBI:16632"/>
        <dbReference type="ChEBI" id="CHEBI:16842"/>
        <dbReference type="ChEBI" id="CHEBI:36241"/>
        <dbReference type="ChEBI" id="CHEBI:57540"/>
        <dbReference type="ChEBI" id="CHEBI:57945"/>
        <dbReference type="EC" id="1.14.13.82"/>
    </reaction>
</comment>
<comment type="cofactor">
    <cofactor evidence="2">
        <name>[2Fe-2S] cluster</name>
        <dbReference type="ChEBI" id="CHEBI:190135"/>
    </cofactor>
    <text evidence="2">Binds 1 [2Fe-2S] cluster.</text>
</comment>
<comment type="cofactor">
    <cofactor evidence="2">
        <name>Fe cation</name>
        <dbReference type="ChEBI" id="CHEBI:24875"/>
    </cofactor>
    <text evidence="2">Binds 1 Fe cation.</text>
</comment>
<comment type="pathway">
    <text>Xenobiotic degradation; vanillyl-alcohol degradation.</text>
</comment>
<comment type="subunit">
    <text>This demethylase system consists of two proteins: an oxygenase and an oxygenase reductase.</text>
</comment>
<comment type="similarity">
    <text evidence="2">Belongs to the bacterial ring-hydroxylating dioxygenase alpha subunit family.</text>
</comment>
<organism>
    <name type="scientific">Pseudomonas sp. (strain HR199 / DSM 7063)</name>
    <dbReference type="NCBI Taxonomy" id="86003"/>
    <lineage>
        <taxon>Bacteria</taxon>
        <taxon>Pseudomonadati</taxon>
        <taxon>Pseudomonadota</taxon>
        <taxon>Gammaproteobacteria</taxon>
        <taxon>Pseudomonadales</taxon>
        <taxon>Pseudomonadaceae</taxon>
        <taxon>Pseudomonas</taxon>
    </lineage>
</organism>
<dbReference type="EC" id="1.14.13.82"/>
<dbReference type="EMBL" id="Y11521">
    <property type="protein sequence ID" value="CAA72287.1"/>
    <property type="molecule type" value="Genomic_DNA"/>
</dbReference>
<dbReference type="SMR" id="O05616"/>
<dbReference type="KEGG" id="ag:CAA72287"/>
<dbReference type="BioCyc" id="MetaCyc:MONOMER-14062"/>
<dbReference type="UniPathway" id="UPA00217"/>
<dbReference type="GO" id="GO:0051537">
    <property type="term" value="F:2 iron, 2 sulfur cluster binding"/>
    <property type="evidence" value="ECO:0007669"/>
    <property type="project" value="UniProtKB-KW"/>
</dbReference>
<dbReference type="GO" id="GO:0005506">
    <property type="term" value="F:iron ion binding"/>
    <property type="evidence" value="ECO:0007669"/>
    <property type="project" value="InterPro"/>
</dbReference>
<dbReference type="GO" id="GO:0018489">
    <property type="term" value="F:vanillate monooxygenase activity"/>
    <property type="evidence" value="ECO:0007669"/>
    <property type="project" value="UniProtKB-EC"/>
</dbReference>
<dbReference type="GO" id="GO:0046274">
    <property type="term" value="P:lignin catabolic process"/>
    <property type="evidence" value="ECO:0007669"/>
    <property type="project" value="UniProtKB-KW"/>
</dbReference>
<dbReference type="CDD" id="cd08878">
    <property type="entry name" value="RHO_alpha_C_DMO-like"/>
    <property type="match status" value="1"/>
</dbReference>
<dbReference type="Gene3D" id="3.90.380.10">
    <property type="entry name" value="Naphthalene 1,2-dioxygenase Alpha Subunit, Chain A, domain 1"/>
    <property type="match status" value="1"/>
</dbReference>
<dbReference type="Gene3D" id="2.102.10.10">
    <property type="entry name" value="Rieske [2Fe-2S] iron-sulphur domain"/>
    <property type="match status" value="1"/>
</dbReference>
<dbReference type="InterPro" id="IPR050584">
    <property type="entry name" value="Cholesterol_7-desaturase"/>
</dbReference>
<dbReference type="InterPro" id="IPR017941">
    <property type="entry name" value="Rieske_2Fe-2S"/>
</dbReference>
<dbReference type="InterPro" id="IPR036922">
    <property type="entry name" value="Rieske_2Fe-2S_sf"/>
</dbReference>
<dbReference type="InterPro" id="IPR015881">
    <property type="entry name" value="Ring-hydroxy_dOase_2Fe2S_BS"/>
</dbReference>
<dbReference type="InterPro" id="IPR044043">
    <property type="entry name" value="VanA_C_cat"/>
</dbReference>
<dbReference type="PANTHER" id="PTHR21266:SF60">
    <property type="entry name" value="3-KETOSTEROID-9-ALPHA-MONOOXYGENASE, OXYGENASE COMPONENT"/>
    <property type="match status" value="1"/>
</dbReference>
<dbReference type="PANTHER" id="PTHR21266">
    <property type="entry name" value="IRON-SULFUR DOMAIN CONTAINING PROTEIN"/>
    <property type="match status" value="1"/>
</dbReference>
<dbReference type="Pfam" id="PF00355">
    <property type="entry name" value="Rieske"/>
    <property type="match status" value="1"/>
</dbReference>
<dbReference type="Pfam" id="PF19112">
    <property type="entry name" value="VanA_C"/>
    <property type="match status" value="1"/>
</dbReference>
<dbReference type="SUPFAM" id="SSF55961">
    <property type="entry name" value="Bet v1-like"/>
    <property type="match status" value="1"/>
</dbReference>
<dbReference type="SUPFAM" id="SSF50022">
    <property type="entry name" value="ISP domain"/>
    <property type="match status" value="1"/>
</dbReference>
<dbReference type="PROSITE" id="PS51296">
    <property type="entry name" value="RIESKE"/>
    <property type="match status" value="1"/>
</dbReference>
<dbReference type="PROSITE" id="PS00570">
    <property type="entry name" value="RING_HYDROXYL_ALPHA"/>
    <property type="match status" value="1"/>
</dbReference>